<gene>
    <name evidence="1" type="primary">aroK</name>
    <name type="ordered locus">Clim_0946</name>
</gene>
<reference key="1">
    <citation type="submission" date="2008-05" db="EMBL/GenBank/DDBJ databases">
        <title>Complete sequence of Chlorobium limicola DSM 245.</title>
        <authorList>
            <consortium name="US DOE Joint Genome Institute"/>
            <person name="Lucas S."/>
            <person name="Copeland A."/>
            <person name="Lapidus A."/>
            <person name="Glavina del Rio T."/>
            <person name="Dalin E."/>
            <person name="Tice H."/>
            <person name="Bruce D."/>
            <person name="Goodwin L."/>
            <person name="Pitluck S."/>
            <person name="Schmutz J."/>
            <person name="Larimer F."/>
            <person name="Land M."/>
            <person name="Hauser L."/>
            <person name="Kyrpides N."/>
            <person name="Ovchinnikova G."/>
            <person name="Zhao F."/>
            <person name="Li T."/>
            <person name="Liu Z."/>
            <person name="Overmann J."/>
            <person name="Bryant D.A."/>
            <person name="Richardson P."/>
        </authorList>
    </citation>
    <scope>NUCLEOTIDE SEQUENCE [LARGE SCALE GENOMIC DNA]</scope>
    <source>
        <strain>DSM 245 / NBRC 103803 / 6330</strain>
    </source>
</reference>
<evidence type="ECO:0000255" key="1">
    <source>
        <dbReference type="HAMAP-Rule" id="MF_00109"/>
    </source>
</evidence>
<protein>
    <recommendedName>
        <fullName evidence="1">Shikimate kinase</fullName>
        <shortName evidence="1">SK</shortName>
        <ecNumber evidence="1">2.7.1.71</ecNumber>
    </recommendedName>
</protein>
<keyword id="KW-0028">Amino-acid biosynthesis</keyword>
<keyword id="KW-0057">Aromatic amino acid biosynthesis</keyword>
<keyword id="KW-0067">ATP-binding</keyword>
<keyword id="KW-0963">Cytoplasm</keyword>
<keyword id="KW-0418">Kinase</keyword>
<keyword id="KW-0460">Magnesium</keyword>
<keyword id="KW-0479">Metal-binding</keyword>
<keyword id="KW-0547">Nucleotide-binding</keyword>
<keyword id="KW-0808">Transferase</keyword>
<feature type="chain" id="PRO_1000094376" description="Shikimate kinase">
    <location>
        <begin position="1"/>
        <end position="199"/>
    </location>
</feature>
<feature type="binding site" evidence="1">
    <location>
        <begin position="14"/>
        <end position="19"/>
    </location>
    <ligand>
        <name>ATP</name>
        <dbReference type="ChEBI" id="CHEBI:30616"/>
    </ligand>
</feature>
<feature type="binding site" evidence="1">
    <location>
        <position position="18"/>
    </location>
    <ligand>
        <name>Mg(2+)</name>
        <dbReference type="ChEBI" id="CHEBI:18420"/>
    </ligand>
</feature>
<feature type="binding site" evidence="1">
    <location>
        <position position="36"/>
    </location>
    <ligand>
        <name>substrate</name>
    </ligand>
</feature>
<feature type="binding site" evidence="1">
    <location>
        <position position="60"/>
    </location>
    <ligand>
        <name>substrate</name>
    </ligand>
</feature>
<feature type="binding site" evidence="1">
    <location>
        <position position="82"/>
    </location>
    <ligand>
        <name>substrate</name>
    </ligand>
</feature>
<feature type="binding site" evidence="1">
    <location>
        <position position="120"/>
    </location>
    <ligand>
        <name>ATP</name>
        <dbReference type="ChEBI" id="CHEBI:30616"/>
    </ligand>
</feature>
<feature type="binding site" evidence="1">
    <location>
        <position position="147"/>
    </location>
    <ligand>
        <name>substrate</name>
    </ligand>
</feature>
<organism>
    <name type="scientific">Chlorobium limicola (strain DSM 245 / NBRC 103803 / 6330)</name>
    <dbReference type="NCBI Taxonomy" id="290315"/>
    <lineage>
        <taxon>Bacteria</taxon>
        <taxon>Pseudomonadati</taxon>
        <taxon>Chlorobiota</taxon>
        <taxon>Chlorobiia</taxon>
        <taxon>Chlorobiales</taxon>
        <taxon>Chlorobiaceae</taxon>
        <taxon>Chlorobium/Pelodictyon group</taxon>
        <taxon>Chlorobium</taxon>
    </lineage>
</organism>
<dbReference type="EC" id="2.7.1.71" evidence="1"/>
<dbReference type="EMBL" id="CP001097">
    <property type="protein sequence ID" value="ACD90022.1"/>
    <property type="molecule type" value="Genomic_DNA"/>
</dbReference>
<dbReference type="RefSeq" id="WP_012465901.1">
    <property type="nucleotide sequence ID" value="NC_010803.1"/>
</dbReference>
<dbReference type="SMR" id="B3EIT1"/>
<dbReference type="STRING" id="290315.Clim_0946"/>
<dbReference type="KEGG" id="cli:Clim_0946"/>
<dbReference type="eggNOG" id="COG0703">
    <property type="taxonomic scope" value="Bacteria"/>
</dbReference>
<dbReference type="HOGENOM" id="CLU_057607_2_1_10"/>
<dbReference type="OrthoDB" id="9800332at2"/>
<dbReference type="UniPathway" id="UPA00053">
    <property type="reaction ID" value="UER00088"/>
</dbReference>
<dbReference type="Proteomes" id="UP000008841">
    <property type="component" value="Chromosome"/>
</dbReference>
<dbReference type="GO" id="GO:0005829">
    <property type="term" value="C:cytosol"/>
    <property type="evidence" value="ECO:0007669"/>
    <property type="project" value="TreeGrafter"/>
</dbReference>
<dbReference type="GO" id="GO:0005524">
    <property type="term" value="F:ATP binding"/>
    <property type="evidence" value="ECO:0007669"/>
    <property type="project" value="UniProtKB-UniRule"/>
</dbReference>
<dbReference type="GO" id="GO:0000287">
    <property type="term" value="F:magnesium ion binding"/>
    <property type="evidence" value="ECO:0007669"/>
    <property type="project" value="UniProtKB-UniRule"/>
</dbReference>
<dbReference type="GO" id="GO:0004765">
    <property type="term" value="F:shikimate kinase activity"/>
    <property type="evidence" value="ECO:0007669"/>
    <property type="project" value="UniProtKB-UniRule"/>
</dbReference>
<dbReference type="GO" id="GO:0008652">
    <property type="term" value="P:amino acid biosynthetic process"/>
    <property type="evidence" value="ECO:0007669"/>
    <property type="project" value="UniProtKB-KW"/>
</dbReference>
<dbReference type="GO" id="GO:0009073">
    <property type="term" value="P:aromatic amino acid family biosynthetic process"/>
    <property type="evidence" value="ECO:0007669"/>
    <property type="project" value="UniProtKB-KW"/>
</dbReference>
<dbReference type="GO" id="GO:0009423">
    <property type="term" value="P:chorismate biosynthetic process"/>
    <property type="evidence" value="ECO:0007669"/>
    <property type="project" value="UniProtKB-UniRule"/>
</dbReference>
<dbReference type="CDD" id="cd00464">
    <property type="entry name" value="SK"/>
    <property type="match status" value="1"/>
</dbReference>
<dbReference type="Gene3D" id="3.40.50.300">
    <property type="entry name" value="P-loop containing nucleotide triphosphate hydrolases"/>
    <property type="match status" value="1"/>
</dbReference>
<dbReference type="HAMAP" id="MF_00109">
    <property type="entry name" value="Shikimate_kinase"/>
    <property type="match status" value="1"/>
</dbReference>
<dbReference type="InterPro" id="IPR027417">
    <property type="entry name" value="P-loop_NTPase"/>
</dbReference>
<dbReference type="InterPro" id="IPR031322">
    <property type="entry name" value="Shikimate/glucono_kinase"/>
</dbReference>
<dbReference type="InterPro" id="IPR000623">
    <property type="entry name" value="Shikimate_kinase/TSH1"/>
</dbReference>
<dbReference type="InterPro" id="IPR023000">
    <property type="entry name" value="Shikimate_kinase_CS"/>
</dbReference>
<dbReference type="PANTHER" id="PTHR21087">
    <property type="entry name" value="SHIKIMATE KINASE"/>
    <property type="match status" value="1"/>
</dbReference>
<dbReference type="PANTHER" id="PTHR21087:SF16">
    <property type="entry name" value="SHIKIMATE KINASE 1, CHLOROPLASTIC"/>
    <property type="match status" value="1"/>
</dbReference>
<dbReference type="Pfam" id="PF01202">
    <property type="entry name" value="SKI"/>
    <property type="match status" value="1"/>
</dbReference>
<dbReference type="PRINTS" id="PR01100">
    <property type="entry name" value="SHIKIMTKNASE"/>
</dbReference>
<dbReference type="SUPFAM" id="SSF52540">
    <property type="entry name" value="P-loop containing nucleoside triphosphate hydrolases"/>
    <property type="match status" value="1"/>
</dbReference>
<dbReference type="PROSITE" id="PS01128">
    <property type="entry name" value="SHIKIMATE_KINASE"/>
    <property type="match status" value="1"/>
</dbReference>
<accession>B3EIT1</accession>
<comment type="function">
    <text evidence="1">Catalyzes the specific phosphorylation of the 3-hydroxyl group of shikimic acid using ATP as a cosubstrate.</text>
</comment>
<comment type="catalytic activity">
    <reaction evidence="1">
        <text>shikimate + ATP = 3-phosphoshikimate + ADP + H(+)</text>
        <dbReference type="Rhea" id="RHEA:13121"/>
        <dbReference type="ChEBI" id="CHEBI:15378"/>
        <dbReference type="ChEBI" id="CHEBI:30616"/>
        <dbReference type="ChEBI" id="CHEBI:36208"/>
        <dbReference type="ChEBI" id="CHEBI:145989"/>
        <dbReference type="ChEBI" id="CHEBI:456216"/>
        <dbReference type="EC" id="2.7.1.71"/>
    </reaction>
</comment>
<comment type="cofactor">
    <cofactor evidence="1">
        <name>Mg(2+)</name>
        <dbReference type="ChEBI" id="CHEBI:18420"/>
    </cofactor>
    <text evidence="1">Binds 1 Mg(2+) ion per subunit.</text>
</comment>
<comment type="pathway">
    <text evidence="1">Metabolic intermediate biosynthesis; chorismate biosynthesis; chorismate from D-erythrose 4-phosphate and phosphoenolpyruvate: step 5/7.</text>
</comment>
<comment type="subunit">
    <text evidence="1">Monomer.</text>
</comment>
<comment type="subcellular location">
    <subcellularLocation>
        <location evidence="1">Cytoplasm</location>
    </subcellularLocation>
</comment>
<comment type="similarity">
    <text evidence="1">Belongs to the shikimate kinase family.</text>
</comment>
<name>AROK_CHLL2</name>
<proteinExistence type="inferred from homology"/>
<sequence>MKHHSLIFLTGFSGSGKSTIGPLLANSLGYGFIDLDQEIESKAGKSITKIFAEEGEQTFRNLELETLRQLTGKKELVVSLGGGVLENNDCYRLIRENGTLVYLKSSPRSLARRLCNKTDRPLLKGEHGTRLSREEIELKISTILEKREPRYATADLSVQTDIKRIGSTVEELTRTIIRFVRQAEQARLKQQSDNNREKQ</sequence>